<proteinExistence type="inferred from homology"/>
<gene>
    <name evidence="1" type="primary">argS</name>
    <name type="ordered locus">LIC_12102</name>
</gene>
<comment type="catalytic activity">
    <reaction evidence="1">
        <text>tRNA(Arg) + L-arginine + ATP = L-arginyl-tRNA(Arg) + AMP + diphosphate</text>
        <dbReference type="Rhea" id="RHEA:20301"/>
        <dbReference type="Rhea" id="RHEA-COMP:9658"/>
        <dbReference type="Rhea" id="RHEA-COMP:9673"/>
        <dbReference type="ChEBI" id="CHEBI:30616"/>
        <dbReference type="ChEBI" id="CHEBI:32682"/>
        <dbReference type="ChEBI" id="CHEBI:33019"/>
        <dbReference type="ChEBI" id="CHEBI:78442"/>
        <dbReference type="ChEBI" id="CHEBI:78513"/>
        <dbReference type="ChEBI" id="CHEBI:456215"/>
        <dbReference type="EC" id="6.1.1.19"/>
    </reaction>
</comment>
<comment type="subunit">
    <text evidence="1">Monomer.</text>
</comment>
<comment type="subcellular location">
    <subcellularLocation>
        <location evidence="1">Cytoplasm</location>
    </subcellularLocation>
</comment>
<comment type="similarity">
    <text evidence="1">Belongs to the class-I aminoacyl-tRNA synthetase family.</text>
</comment>
<comment type="sequence caution" evidence="2">
    <conflict type="erroneous initiation">
        <sequence resource="EMBL-CDS" id="AAS70673"/>
    </conflict>
    <text>Extended N-terminus.</text>
</comment>
<name>SYR_LEPIC</name>
<sequence length="586" mass="66821">MKENETLKQIVLKTLEESVNSLISSFPEVEKEAFKIKIEYSRDEKFGDYSTSFALENSKLLKRNPIQVSKELVEILQKRTDLFEKVDFTPPGFVNFRISTSFLLNYIETSVLSGNYFPKVDLPLKINLEFVSANPTGPLNIVSARAAANGDTMASLLKAIGHNVDKEFYINDYGNQVFLLGVSTLVRIRELKGEEGTQQETTDDTPIEIILEKNILPAEGYRGEYIKDIASSLLKDPKKNVTIENLLKQKKYKELAELCAVWTIENNLIWQRKDLDAFGVEFDCYFSERTLHEADKVLSVMKDLEKSGKIFQEDGKKVFRSTEYGDDKDRVVVRDDGRPTYLLADIAYHKDKIERGYDKIYDIWGPDHHGYISRLSGAVQSLGYKKENFKVIISQQVNLLESGQKVKMSKRAGSFQTMSDLIGFLGKHGKDVGRYFFVMRSLDAPLDFDLDLAKDESDKNPVFYLQYAHARICSIFKEVGDQTSKEAAAILEMSEERKRLLFWIARFPEEIFDSANAMEPHRVTNYLQSFAKAFTSFYLAKDNRLKDASKEVRLGLARICLAAKNVLAEGLKLIGVSAPERMEKEN</sequence>
<organism>
    <name type="scientific">Leptospira interrogans serogroup Icterohaemorrhagiae serovar copenhageni (strain Fiocruz L1-130)</name>
    <dbReference type="NCBI Taxonomy" id="267671"/>
    <lineage>
        <taxon>Bacteria</taxon>
        <taxon>Pseudomonadati</taxon>
        <taxon>Spirochaetota</taxon>
        <taxon>Spirochaetia</taxon>
        <taxon>Leptospirales</taxon>
        <taxon>Leptospiraceae</taxon>
        <taxon>Leptospira</taxon>
    </lineage>
</organism>
<keyword id="KW-0030">Aminoacyl-tRNA synthetase</keyword>
<keyword id="KW-0067">ATP-binding</keyword>
<keyword id="KW-0963">Cytoplasm</keyword>
<keyword id="KW-0436">Ligase</keyword>
<keyword id="KW-0547">Nucleotide-binding</keyword>
<keyword id="KW-0648">Protein biosynthesis</keyword>
<protein>
    <recommendedName>
        <fullName evidence="1">Arginine--tRNA ligase</fullName>
        <ecNumber evidence="1">6.1.1.19</ecNumber>
    </recommendedName>
    <alternativeName>
        <fullName evidence="1">Arginyl-tRNA synthetase</fullName>
        <shortName evidence="1">ArgRS</shortName>
    </alternativeName>
</protein>
<evidence type="ECO:0000255" key="1">
    <source>
        <dbReference type="HAMAP-Rule" id="MF_00123"/>
    </source>
</evidence>
<evidence type="ECO:0000305" key="2"/>
<accession>Q72QL1</accession>
<reference key="1">
    <citation type="journal article" date="2004" name="J. Bacteriol.">
        <title>Comparative genomics of two Leptospira interrogans serovars reveals novel insights into physiology and pathogenesis.</title>
        <authorList>
            <person name="Nascimento A.L.T.O."/>
            <person name="Ko A.I."/>
            <person name="Martins E.A.L."/>
            <person name="Monteiro-Vitorello C.B."/>
            <person name="Ho P.L."/>
            <person name="Haake D.A."/>
            <person name="Verjovski-Almeida S."/>
            <person name="Hartskeerl R.A."/>
            <person name="Marques M.V."/>
            <person name="Oliveira M.C."/>
            <person name="Menck C.F.M."/>
            <person name="Leite L.C.C."/>
            <person name="Carrer H."/>
            <person name="Coutinho L.L."/>
            <person name="Degrave W.M."/>
            <person name="Dellagostin O.A."/>
            <person name="El-Dorry H."/>
            <person name="Ferro E.S."/>
            <person name="Ferro M.I.T."/>
            <person name="Furlan L.R."/>
            <person name="Gamberini M."/>
            <person name="Giglioti E.A."/>
            <person name="Goes-Neto A."/>
            <person name="Goldman G.H."/>
            <person name="Goldman M.H.S."/>
            <person name="Harakava R."/>
            <person name="Jeronimo S.M.B."/>
            <person name="Junqueira-de-Azevedo I.L.M."/>
            <person name="Kimura E.T."/>
            <person name="Kuramae E.E."/>
            <person name="Lemos E.G.M."/>
            <person name="Lemos M.V.F."/>
            <person name="Marino C.L."/>
            <person name="Nunes L.R."/>
            <person name="de Oliveira R.C."/>
            <person name="Pereira G.G."/>
            <person name="Reis M.S."/>
            <person name="Schriefer A."/>
            <person name="Siqueira W.J."/>
            <person name="Sommer P."/>
            <person name="Tsai S.M."/>
            <person name="Simpson A.J.G."/>
            <person name="Ferro J.A."/>
            <person name="Camargo L.E.A."/>
            <person name="Kitajima J.P."/>
            <person name="Setubal J.C."/>
            <person name="Van Sluys M.A."/>
        </authorList>
    </citation>
    <scope>NUCLEOTIDE SEQUENCE [LARGE SCALE GENOMIC DNA]</scope>
    <source>
        <strain>Fiocruz L1-130</strain>
    </source>
</reference>
<dbReference type="EC" id="6.1.1.19" evidence="1"/>
<dbReference type="EMBL" id="AE016823">
    <property type="protein sequence ID" value="AAS70673.1"/>
    <property type="status" value="ALT_INIT"/>
    <property type="molecule type" value="Genomic_DNA"/>
</dbReference>
<dbReference type="RefSeq" id="WP_000662000.1">
    <property type="nucleotide sequence ID" value="NC_005823.1"/>
</dbReference>
<dbReference type="SMR" id="Q72QL1"/>
<dbReference type="GeneID" id="61141986"/>
<dbReference type="KEGG" id="lic:LIC_12102"/>
<dbReference type="HOGENOM" id="CLU_006406_0_1_12"/>
<dbReference type="Proteomes" id="UP000007037">
    <property type="component" value="Chromosome I"/>
</dbReference>
<dbReference type="GO" id="GO:0005737">
    <property type="term" value="C:cytoplasm"/>
    <property type="evidence" value="ECO:0007669"/>
    <property type="project" value="UniProtKB-SubCell"/>
</dbReference>
<dbReference type="GO" id="GO:0004814">
    <property type="term" value="F:arginine-tRNA ligase activity"/>
    <property type="evidence" value="ECO:0007669"/>
    <property type="project" value="UniProtKB-UniRule"/>
</dbReference>
<dbReference type="GO" id="GO:0005524">
    <property type="term" value="F:ATP binding"/>
    <property type="evidence" value="ECO:0007669"/>
    <property type="project" value="UniProtKB-UniRule"/>
</dbReference>
<dbReference type="GO" id="GO:0006420">
    <property type="term" value="P:arginyl-tRNA aminoacylation"/>
    <property type="evidence" value="ECO:0007669"/>
    <property type="project" value="UniProtKB-UniRule"/>
</dbReference>
<dbReference type="CDD" id="cd00671">
    <property type="entry name" value="ArgRS_core"/>
    <property type="match status" value="1"/>
</dbReference>
<dbReference type="FunFam" id="1.10.730.10:FF:000008">
    <property type="entry name" value="Arginine--tRNA ligase"/>
    <property type="match status" value="1"/>
</dbReference>
<dbReference type="FunFam" id="3.40.50.620:FF:000062">
    <property type="entry name" value="Arginine--tRNA ligase"/>
    <property type="match status" value="1"/>
</dbReference>
<dbReference type="Gene3D" id="3.30.1360.70">
    <property type="entry name" value="Arginyl tRNA synthetase N-terminal domain"/>
    <property type="match status" value="1"/>
</dbReference>
<dbReference type="Gene3D" id="3.40.50.620">
    <property type="entry name" value="HUPs"/>
    <property type="match status" value="1"/>
</dbReference>
<dbReference type="Gene3D" id="1.10.730.10">
    <property type="entry name" value="Isoleucyl-tRNA Synthetase, Domain 1"/>
    <property type="match status" value="1"/>
</dbReference>
<dbReference type="HAMAP" id="MF_00123">
    <property type="entry name" value="Arg_tRNA_synth"/>
    <property type="match status" value="1"/>
</dbReference>
<dbReference type="InterPro" id="IPR001278">
    <property type="entry name" value="Arg-tRNA-ligase"/>
</dbReference>
<dbReference type="InterPro" id="IPR005148">
    <property type="entry name" value="Arg-tRNA-synth_N"/>
</dbReference>
<dbReference type="InterPro" id="IPR036695">
    <property type="entry name" value="Arg-tRNA-synth_N_sf"/>
</dbReference>
<dbReference type="InterPro" id="IPR035684">
    <property type="entry name" value="ArgRS_core"/>
</dbReference>
<dbReference type="InterPro" id="IPR008909">
    <property type="entry name" value="DALR_anticod-bd"/>
</dbReference>
<dbReference type="InterPro" id="IPR014729">
    <property type="entry name" value="Rossmann-like_a/b/a_fold"/>
</dbReference>
<dbReference type="InterPro" id="IPR009080">
    <property type="entry name" value="tRNAsynth_Ia_anticodon-bd"/>
</dbReference>
<dbReference type="NCBIfam" id="TIGR00456">
    <property type="entry name" value="argS"/>
    <property type="match status" value="1"/>
</dbReference>
<dbReference type="PANTHER" id="PTHR11956:SF5">
    <property type="entry name" value="ARGININE--TRNA LIGASE, CYTOPLASMIC"/>
    <property type="match status" value="1"/>
</dbReference>
<dbReference type="PANTHER" id="PTHR11956">
    <property type="entry name" value="ARGINYL-TRNA SYNTHETASE"/>
    <property type="match status" value="1"/>
</dbReference>
<dbReference type="Pfam" id="PF03485">
    <property type="entry name" value="Arg_tRNA_synt_N"/>
    <property type="match status" value="1"/>
</dbReference>
<dbReference type="Pfam" id="PF05746">
    <property type="entry name" value="DALR_1"/>
    <property type="match status" value="1"/>
</dbReference>
<dbReference type="Pfam" id="PF00750">
    <property type="entry name" value="tRNA-synt_1d"/>
    <property type="match status" value="1"/>
</dbReference>
<dbReference type="PRINTS" id="PR01038">
    <property type="entry name" value="TRNASYNTHARG"/>
</dbReference>
<dbReference type="SMART" id="SM01016">
    <property type="entry name" value="Arg_tRNA_synt_N"/>
    <property type="match status" value="1"/>
</dbReference>
<dbReference type="SMART" id="SM00836">
    <property type="entry name" value="DALR_1"/>
    <property type="match status" value="1"/>
</dbReference>
<dbReference type="SUPFAM" id="SSF47323">
    <property type="entry name" value="Anticodon-binding domain of a subclass of class I aminoacyl-tRNA synthetases"/>
    <property type="match status" value="1"/>
</dbReference>
<dbReference type="SUPFAM" id="SSF55190">
    <property type="entry name" value="Arginyl-tRNA synthetase (ArgRS), N-terminal 'additional' domain"/>
    <property type="match status" value="1"/>
</dbReference>
<dbReference type="SUPFAM" id="SSF52374">
    <property type="entry name" value="Nucleotidylyl transferase"/>
    <property type="match status" value="1"/>
</dbReference>
<feature type="chain" id="PRO_0000151570" description="Arginine--tRNA ligase">
    <location>
        <begin position="1"/>
        <end position="586"/>
    </location>
</feature>
<feature type="short sequence motif" description="'HIGH' region">
    <location>
        <begin position="133"/>
        <end position="143"/>
    </location>
</feature>